<keyword id="KW-0375">Hydrogen ion transport</keyword>
<keyword id="KW-0406">Ion transport</keyword>
<keyword id="KW-0472">Membrane</keyword>
<keyword id="KW-0496">Mitochondrion</keyword>
<keyword id="KW-0999">Mitochondrion inner membrane</keyword>
<keyword id="KW-1185">Reference proteome</keyword>
<keyword id="KW-0812">Transmembrane</keyword>
<keyword id="KW-1133">Transmembrane helix</keyword>
<keyword id="KW-0813">Transport</keyword>
<name>MIC27_VANPO</name>
<organism>
    <name type="scientific">Vanderwaltozyma polyspora (strain ATCC 22028 / DSM 70294 / BCRC 21397 / CBS 2163 / NBRC 10782 / NRRL Y-8283 / UCD 57-17)</name>
    <name type="common">Kluyveromyces polysporus</name>
    <dbReference type="NCBI Taxonomy" id="436907"/>
    <lineage>
        <taxon>Eukaryota</taxon>
        <taxon>Fungi</taxon>
        <taxon>Dikarya</taxon>
        <taxon>Ascomycota</taxon>
        <taxon>Saccharomycotina</taxon>
        <taxon>Saccharomycetes</taxon>
        <taxon>Saccharomycetales</taxon>
        <taxon>Saccharomycetaceae</taxon>
        <taxon>Vanderwaltozyma</taxon>
    </lineage>
</organism>
<feature type="chain" id="PRO_0000399836" description="MICOS complex subunit MIC27">
    <location>
        <begin position="1"/>
        <end position="260"/>
    </location>
</feature>
<feature type="topological domain" description="Mitochondrial intermembrane" evidence="2">
    <location>
        <begin position="1"/>
        <end position="126"/>
    </location>
</feature>
<feature type="transmembrane region" description="Helical" evidence="2">
    <location>
        <begin position="127"/>
        <end position="145"/>
    </location>
</feature>
<feature type="topological domain" description="Mitochondrial matrix" evidence="2">
    <location>
        <begin position="146"/>
        <end position="169"/>
    </location>
</feature>
<feature type="transmembrane region" description="Helical" evidence="2">
    <location>
        <begin position="170"/>
        <end position="189"/>
    </location>
</feature>
<feature type="topological domain" description="Mitochondrial intermembrane" evidence="2">
    <location>
        <begin position="190"/>
        <end position="260"/>
    </location>
</feature>
<comment type="function">
    <text evidence="1">Component of the MICOS complex, a large protein complex of the mitochondrial inner membrane that plays crucial roles in the maintenance of crista junctions, inner membrane architecture, and formation of contact sites to the outer membrane.</text>
</comment>
<comment type="subunit">
    <text evidence="1">Component of the mitochondrial contact site and cristae organizing system (MICOS) complex.</text>
</comment>
<comment type="subcellular location">
    <subcellularLocation>
        <location evidence="1">Mitochondrion inner membrane</location>
        <topology evidence="3">Multi-pass membrane protein</topology>
    </subcellularLocation>
</comment>
<comment type="similarity">
    <text evidence="3">Belongs to the apolipoprotein O/MICOS complex subunit Mic27 family.</text>
</comment>
<gene>
    <name type="primary">MIC27</name>
    <name type="ORF">Kpol_505p4</name>
</gene>
<accession>A7TN96</accession>
<sequence>MIFDYLYCKPVKEVVPKGSAPVDDLNHELVKTIDKIDDNVDNAAIVESNGSQWNDVVKYRLSDDVEITGSEQLTESIRGWRLNIVDELDKLRSKWDTGKQEMYDKKTDTNAFLNDNVFNNKFENEELVVPSVFLSFGAFCSGRILSNPKNWGHSKTGSLTAVRSGLLYKSLTNLPSRLLLPWIFAGYTFSQFSPKTFDNICKVVEEDLLPPAFAKSCRDNWNSIYVNGIKKHSQGLSSSIDENLQNSIRSIREFIYKSLY</sequence>
<reference key="1">
    <citation type="journal article" date="2007" name="Proc. Natl. Acad. Sci. U.S.A.">
        <title>Independent sorting-out of thousands of duplicated gene pairs in two yeast species descended from a whole-genome duplication.</title>
        <authorList>
            <person name="Scannell D.R."/>
            <person name="Frank A.C."/>
            <person name="Conant G.C."/>
            <person name="Byrne K.P."/>
            <person name="Woolfit M."/>
            <person name="Wolfe K.H."/>
        </authorList>
    </citation>
    <scope>NUCLEOTIDE SEQUENCE [LARGE SCALE GENOMIC DNA]</scope>
    <source>
        <strain>ATCC 22028 / DSM 70294 / BCRC 21397 / CBS 2163 / NBRC 10782 / NRRL Y-8283 / UCD 57-17</strain>
    </source>
</reference>
<proteinExistence type="inferred from homology"/>
<dbReference type="EMBL" id="DS480429">
    <property type="protein sequence ID" value="EDO16228.1"/>
    <property type="molecule type" value="Genomic_DNA"/>
</dbReference>
<dbReference type="RefSeq" id="XP_001644086.1">
    <property type="nucleotide sequence ID" value="XM_001644036.1"/>
</dbReference>
<dbReference type="SMR" id="A7TN96"/>
<dbReference type="FunCoup" id="A7TN96">
    <property type="interactions" value="49"/>
</dbReference>
<dbReference type="STRING" id="436907.A7TN96"/>
<dbReference type="GeneID" id="5544402"/>
<dbReference type="KEGG" id="vpo:Kpol_505p4"/>
<dbReference type="eggNOG" id="ENOG502S31N">
    <property type="taxonomic scope" value="Eukaryota"/>
</dbReference>
<dbReference type="HOGENOM" id="CLU_093584_0_0_1"/>
<dbReference type="InParanoid" id="A7TN96"/>
<dbReference type="OrthoDB" id="4039294at2759"/>
<dbReference type="PhylomeDB" id="A7TN96"/>
<dbReference type="Proteomes" id="UP000000267">
    <property type="component" value="Unassembled WGS sequence"/>
</dbReference>
<dbReference type="GO" id="GO:0005743">
    <property type="term" value="C:mitochondrial inner membrane"/>
    <property type="evidence" value="ECO:0007669"/>
    <property type="project" value="UniProtKB-SubCell"/>
</dbReference>
<dbReference type="GO" id="GO:1902600">
    <property type="term" value="P:proton transmembrane transport"/>
    <property type="evidence" value="ECO:0007669"/>
    <property type="project" value="UniProtKB-KW"/>
</dbReference>
<protein>
    <recommendedName>
        <fullName>MICOS complex subunit MIC27</fullName>
    </recommendedName>
</protein>
<evidence type="ECO:0000250" key="1"/>
<evidence type="ECO:0000255" key="2"/>
<evidence type="ECO:0000305" key="3"/>